<evidence type="ECO:0000255" key="1">
    <source>
        <dbReference type="HAMAP-Rule" id="MF_01131"/>
    </source>
</evidence>
<feature type="chain" id="PRO_0000097890" description="Redox-sensing transcriptional repressor Rex">
    <location>
        <begin position="1"/>
        <end position="234"/>
    </location>
</feature>
<feature type="DNA-binding region" description="H-T-H motif" evidence="1">
    <location>
        <begin position="17"/>
        <end position="56"/>
    </location>
</feature>
<feature type="binding site" evidence="1">
    <location>
        <begin position="91"/>
        <end position="96"/>
    </location>
    <ligand>
        <name>NAD(+)</name>
        <dbReference type="ChEBI" id="CHEBI:57540"/>
    </ligand>
</feature>
<comment type="function">
    <text evidence="1">Modulates transcription in response to changes in cellular NADH/NAD(+) redox state.</text>
</comment>
<comment type="subunit">
    <text evidence="1">Homodimer.</text>
</comment>
<comment type="subcellular location">
    <subcellularLocation>
        <location evidence="1">Cytoplasm</location>
    </subcellularLocation>
</comment>
<comment type="similarity">
    <text evidence="1">Belongs to the transcriptional regulatory Rex family.</text>
</comment>
<accession>Q9RVT3</accession>
<protein>
    <recommendedName>
        <fullName evidence="1">Redox-sensing transcriptional repressor Rex</fullName>
    </recommendedName>
</protein>
<organism>
    <name type="scientific">Deinococcus radiodurans (strain ATCC 13939 / DSM 20539 / JCM 16871 / CCUG 27074 / LMG 4051 / NBRC 15346 / NCIMB 9279 / VKM B-1422 / R1)</name>
    <dbReference type="NCBI Taxonomy" id="243230"/>
    <lineage>
        <taxon>Bacteria</taxon>
        <taxon>Thermotogati</taxon>
        <taxon>Deinococcota</taxon>
        <taxon>Deinococci</taxon>
        <taxon>Deinococcales</taxon>
        <taxon>Deinococcaceae</taxon>
        <taxon>Deinococcus</taxon>
    </lineage>
</organism>
<reference key="1">
    <citation type="journal article" date="1999" name="Science">
        <title>Genome sequence of the radioresistant bacterium Deinococcus radiodurans R1.</title>
        <authorList>
            <person name="White O."/>
            <person name="Eisen J.A."/>
            <person name="Heidelberg J.F."/>
            <person name="Hickey E.K."/>
            <person name="Peterson J.D."/>
            <person name="Dodson R.J."/>
            <person name="Haft D.H."/>
            <person name="Gwinn M.L."/>
            <person name="Nelson W.C."/>
            <person name="Richardson D.L."/>
            <person name="Moffat K.S."/>
            <person name="Qin H."/>
            <person name="Jiang L."/>
            <person name="Pamphile W."/>
            <person name="Crosby M."/>
            <person name="Shen M."/>
            <person name="Vamathevan J.J."/>
            <person name="Lam P."/>
            <person name="McDonald L.A."/>
            <person name="Utterback T.R."/>
            <person name="Zalewski C."/>
            <person name="Makarova K.S."/>
            <person name="Aravind L."/>
            <person name="Daly M.J."/>
            <person name="Minton K.W."/>
            <person name="Fleischmann R.D."/>
            <person name="Ketchum K.A."/>
            <person name="Nelson K.E."/>
            <person name="Salzberg S.L."/>
            <person name="Smith H.O."/>
            <person name="Venter J.C."/>
            <person name="Fraser C.M."/>
        </authorList>
    </citation>
    <scope>NUCLEOTIDE SEQUENCE [LARGE SCALE GENOMIC DNA]</scope>
    <source>
        <strain>ATCC 13939 / DSM 20539 / JCM 16871 / CCUG 27074 / LMG 4051 / NBRC 15346 / NCIMB 9279 / VKM B-1422 / R1</strain>
    </source>
</reference>
<keyword id="KW-0963">Cytoplasm</keyword>
<keyword id="KW-0238">DNA-binding</keyword>
<keyword id="KW-0520">NAD</keyword>
<keyword id="KW-1185">Reference proteome</keyword>
<keyword id="KW-0678">Repressor</keyword>
<keyword id="KW-0804">Transcription</keyword>
<keyword id="KW-0805">Transcription regulation</keyword>
<sequence length="234" mass="25094">MSRVADIPTATVGRVVTYIRVLEELEAQNVLRASSGELARRAGVTPFQVRKDLTYFGRFGTRGIGYTVAVLRRELLRALGLDQTWNVVIVGMGRLGHAIANYPGASDYQFQNVGLFDVAPDVVGREVRGLTIQHMSQLGPFVASVAGTPRQVDMGLLTVPAEHAQAAAQALVAAGVGGILNFAPVVLQTQDLHLPEAFAAPGRREVTVENVDFLAGMKRLAFYMLGPQAGPAEE</sequence>
<name>REX_DEIRA</name>
<dbReference type="EMBL" id="AE000513">
    <property type="protein sequence ID" value="AAF10515.1"/>
    <property type="molecule type" value="Genomic_DNA"/>
</dbReference>
<dbReference type="PIR" id="A75458">
    <property type="entry name" value="A75458"/>
</dbReference>
<dbReference type="RefSeq" id="NP_294663.1">
    <property type="nucleotide sequence ID" value="NC_001263.1"/>
</dbReference>
<dbReference type="SMR" id="Q9RVT3"/>
<dbReference type="FunCoup" id="Q9RVT3">
    <property type="interactions" value="23"/>
</dbReference>
<dbReference type="STRING" id="243230.DR_0939"/>
<dbReference type="PaxDb" id="243230-DR_0939"/>
<dbReference type="EnsemblBacteria" id="AAF10515">
    <property type="protein sequence ID" value="AAF10515"/>
    <property type="gene ID" value="DR_0939"/>
</dbReference>
<dbReference type="KEGG" id="dra:DR_0939"/>
<dbReference type="PATRIC" id="fig|243230.17.peg.1126"/>
<dbReference type="eggNOG" id="COG2344">
    <property type="taxonomic scope" value="Bacteria"/>
</dbReference>
<dbReference type="HOGENOM" id="CLU_061534_1_0_0"/>
<dbReference type="InParanoid" id="Q9RVT3"/>
<dbReference type="OrthoDB" id="9784760at2"/>
<dbReference type="Proteomes" id="UP000002524">
    <property type="component" value="Chromosome 1"/>
</dbReference>
<dbReference type="GO" id="GO:0005737">
    <property type="term" value="C:cytoplasm"/>
    <property type="evidence" value="ECO:0007669"/>
    <property type="project" value="UniProtKB-SubCell"/>
</dbReference>
<dbReference type="GO" id="GO:0003677">
    <property type="term" value="F:DNA binding"/>
    <property type="evidence" value="ECO:0007669"/>
    <property type="project" value="UniProtKB-UniRule"/>
</dbReference>
<dbReference type="GO" id="GO:0003700">
    <property type="term" value="F:DNA-binding transcription factor activity"/>
    <property type="evidence" value="ECO:0007669"/>
    <property type="project" value="UniProtKB-UniRule"/>
</dbReference>
<dbReference type="GO" id="GO:0045892">
    <property type="term" value="P:negative regulation of DNA-templated transcription"/>
    <property type="evidence" value="ECO:0007669"/>
    <property type="project" value="InterPro"/>
</dbReference>
<dbReference type="GO" id="GO:0051775">
    <property type="term" value="P:response to redox state"/>
    <property type="evidence" value="ECO:0007669"/>
    <property type="project" value="InterPro"/>
</dbReference>
<dbReference type="Gene3D" id="3.40.50.720">
    <property type="entry name" value="NAD(P)-binding Rossmann-like Domain"/>
    <property type="match status" value="1"/>
</dbReference>
<dbReference type="Gene3D" id="1.10.10.10">
    <property type="entry name" value="Winged helix-like DNA-binding domain superfamily/Winged helix DNA-binding domain"/>
    <property type="match status" value="1"/>
</dbReference>
<dbReference type="HAMAP" id="MF_01131">
    <property type="entry name" value="Rex"/>
    <property type="match status" value="1"/>
</dbReference>
<dbReference type="InterPro" id="IPR003781">
    <property type="entry name" value="CoA-bd"/>
</dbReference>
<dbReference type="InterPro" id="IPR036291">
    <property type="entry name" value="NAD(P)-bd_dom_sf"/>
</dbReference>
<dbReference type="InterPro" id="IPR009718">
    <property type="entry name" value="Rex_DNA-bd_C_dom"/>
</dbReference>
<dbReference type="InterPro" id="IPR022876">
    <property type="entry name" value="Tscrpt_rep_Rex"/>
</dbReference>
<dbReference type="InterPro" id="IPR036388">
    <property type="entry name" value="WH-like_DNA-bd_sf"/>
</dbReference>
<dbReference type="InterPro" id="IPR036390">
    <property type="entry name" value="WH_DNA-bd_sf"/>
</dbReference>
<dbReference type="NCBIfam" id="NF003994">
    <property type="entry name" value="PRK05472.2-3"/>
    <property type="match status" value="1"/>
</dbReference>
<dbReference type="NCBIfam" id="NF003995">
    <property type="entry name" value="PRK05472.2-4"/>
    <property type="match status" value="1"/>
</dbReference>
<dbReference type="NCBIfam" id="NF003996">
    <property type="entry name" value="PRK05472.2-5"/>
    <property type="match status" value="1"/>
</dbReference>
<dbReference type="PANTHER" id="PTHR35786">
    <property type="entry name" value="REDOX-SENSING TRANSCRIPTIONAL REPRESSOR REX"/>
    <property type="match status" value="1"/>
</dbReference>
<dbReference type="PANTHER" id="PTHR35786:SF1">
    <property type="entry name" value="REDOX-SENSING TRANSCRIPTIONAL REPRESSOR REX 1"/>
    <property type="match status" value="1"/>
</dbReference>
<dbReference type="Pfam" id="PF02629">
    <property type="entry name" value="CoA_binding"/>
    <property type="match status" value="1"/>
</dbReference>
<dbReference type="Pfam" id="PF06971">
    <property type="entry name" value="Put_DNA-bind_N"/>
    <property type="match status" value="1"/>
</dbReference>
<dbReference type="SMART" id="SM00881">
    <property type="entry name" value="CoA_binding"/>
    <property type="match status" value="1"/>
</dbReference>
<dbReference type="SUPFAM" id="SSF51735">
    <property type="entry name" value="NAD(P)-binding Rossmann-fold domains"/>
    <property type="match status" value="1"/>
</dbReference>
<dbReference type="SUPFAM" id="SSF46785">
    <property type="entry name" value="Winged helix' DNA-binding domain"/>
    <property type="match status" value="1"/>
</dbReference>
<gene>
    <name evidence="1" type="primary">rex</name>
    <name type="ordered locus">DR_0939</name>
</gene>
<proteinExistence type="inferred from homology"/>